<name>HEM3_SACI6</name>
<sequence>MKIRIAARGSKLSRIQVDMLGEKLKKIGIEYEIIDIKTKADLFSTEPLSKLGKGVFEKEVNEAVLEGKADIAVHSMKDILSEINPSLEIFAVLERDPPYDILIAEKNLDKLDSNITIGTSSIRRKNFLKYIKPEINTKDIRGNVDTRIRKYLSKEYQGLILAEASLKRLNMTMNYHRLNVYDFTPEANQGIIVALGRKKDEKIKEIFKEINHKDTLDEALAERAVISLVGGGCHSPIGVLFKKEGKEFYGIASYSDGKKKITVSISKPGDPYTIGSELGLLLKKEMKNEDIIP</sequence>
<accession>C4KIZ9</accession>
<protein>
    <recommendedName>
        <fullName evidence="1">Probable porphobilinogen deaminase</fullName>
        <shortName evidence="1">PBG</shortName>
        <ecNumber evidence="1">2.5.1.61</ecNumber>
    </recommendedName>
    <alternativeName>
        <fullName evidence="1">Hydroxymethylbilane synthase</fullName>
        <shortName evidence="1">HMBS</shortName>
    </alternativeName>
    <alternativeName>
        <fullName evidence="1">Pre-uroporphyrinogen synthase</fullName>
    </alternativeName>
</protein>
<evidence type="ECO:0000255" key="1">
    <source>
        <dbReference type="HAMAP-Rule" id="MF_00260"/>
    </source>
</evidence>
<keyword id="KW-0627">Porphyrin biosynthesis</keyword>
<keyword id="KW-0808">Transferase</keyword>
<reference key="1">
    <citation type="journal article" date="2009" name="Proc. Natl. Acad. Sci. U.S.A.">
        <title>Biogeography of the Sulfolobus islandicus pan-genome.</title>
        <authorList>
            <person name="Reno M.L."/>
            <person name="Held N.L."/>
            <person name="Fields C.J."/>
            <person name="Burke P.V."/>
            <person name="Whitaker R.J."/>
        </authorList>
    </citation>
    <scope>NUCLEOTIDE SEQUENCE [LARGE SCALE GENOMIC DNA]</scope>
    <source>
        <strain>M.16.4 / Kamchatka #3</strain>
    </source>
</reference>
<comment type="function">
    <text evidence="1">Tetrapolymerization of the monopyrrole PBG into the hydroxymethylbilane pre-uroporphyrinogen in several discrete steps.</text>
</comment>
<comment type="catalytic activity">
    <reaction evidence="1">
        <text>4 porphobilinogen + H2O = hydroxymethylbilane + 4 NH4(+)</text>
        <dbReference type="Rhea" id="RHEA:13185"/>
        <dbReference type="ChEBI" id="CHEBI:15377"/>
        <dbReference type="ChEBI" id="CHEBI:28938"/>
        <dbReference type="ChEBI" id="CHEBI:57845"/>
        <dbReference type="ChEBI" id="CHEBI:58126"/>
        <dbReference type="EC" id="2.5.1.61"/>
    </reaction>
</comment>
<comment type="cofactor">
    <cofactor evidence="1">
        <name>dipyrromethane</name>
        <dbReference type="ChEBI" id="CHEBI:60342"/>
    </cofactor>
    <text evidence="1">Binds 1 dipyrromethane group covalently.</text>
</comment>
<comment type="pathway">
    <text evidence="1">Porphyrin-containing compound metabolism; protoporphyrin-IX biosynthesis; coproporphyrinogen-III from 5-aminolevulinate: step 2/4.</text>
</comment>
<comment type="miscellaneous">
    <text evidence="1">The porphobilinogen subunits are added to the dipyrromethane group.</text>
</comment>
<comment type="similarity">
    <text evidence="1">Belongs to the HMBS family.</text>
</comment>
<organism>
    <name type="scientific">Saccharolobus islandicus (strain M.16.4 / Kamchatka #3)</name>
    <name type="common">Sulfolobus islandicus</name>
    <dbReference type="NCBI Taxonomy" id="426118"/>
    <lineage>
        <taxon>Archaea</taxon>
        <taxon>Thermoproteota</taxon>
        <taxon>Thermoprotei</taxon>
        <taxon>Sulfolobales</taxon>
        <taxon>Sulfolobaceae</taxon>
        <taxon>Saccharolobus</taxon>
    </lineage>
</organism>
<gene>
    <name evidence="1" type="primary">hemC</name>
    <name type="ordered locus">M164_1960</name>
</gene>
<feature type="chain" id="PRO_1000204663" description="Probable porphobilinogen deaminase">
    <location>
        <begin position="1"/>
        <end position="293"/>
    </location>
</feature>
<feature type="modified residue" description="S-(dipyrrolylmethanemethyl)cysteine" evidence="1">
    <location>
        <position position="233"/>
    </location>
</feature>
<proteinExistence type="inferred from homology"/>
<dbReference type="EC" id="2.5.1.61" evidence="1"/>
<dbReference type="EMBL" id="CP001402">
    <property type="protein sequence ID" value="ACR42563.1"/>
    <property type="molecule type" value="Genomic_DNA"/>
</dbReference>
<dbReference type="RefSeq" id="WP_012714101.1">
    <property type="nucleotide sequence ID" value="NC_012726.1"/>
</dbReference>
<dbReference type="SMR" id="C4KIZ9"/>
<dbReference type="GeneID" id="84053516"/>
<dbReference type="KEGG" id="sid:M164_1960"/>
<dbReference type="HOGENOM" id="CLU_019704_1_0_2"/>
<dbReference type="UniPathway" id="UPA00251">
    <property type="reaction ID" value="UER00319"/>
</dbReference>
<dbReference type="Proteomes" id="UP000001479">
    <property type="component" value="Chromosome"/>
</dbReference>
<dbReference type="GO" id="GO:0005737">
    <property type="term" value="C:cytoplasm"/>
    <property type="evidence" value="ECO:0007669"/>
    <property type="project" value="TreeGrafter"/>
</dbReference>
<dbReference type="GO" id="GO:0004418">
    <property type="term" value="F:hydroxymethylbilane synthase activity"/>
    <property type="evidence" value="ECO:0007669"/>
    <property type="project" value="UniProtKB-UniRule"/>
</dbReference>
<dbReference type="GO" id="GO:0006782">
    <property type="term" value="P:protoporphyrinogen IX biosynthetic process"/>
    <property type="evidence" value="ECO:0007669"/>
    <property type="project" value="UniProtKB-UniRule"/>
</dbReference>
<dbReference type="CDD" id="cd13644">
    <property type="entry name" value="PBP2_HemC_archaea"/>
    <property type="match status" value="1"/>
</dbReference>
<dbReference type="Gene3D" id="3.40.190.10">
    <property type="entry name" value="Periplasmic binding protein-like II"/>
    <property type="match status" value="2"/>
</dbReference>
<dbReference type="Gene3D" id="3.30.160.40">
    <property type="entry name" value="Porphobilinogen deaminase, C-terminal domain"/>
    <property type="match status" value="1"/>
</dbReference>
<dbReference type="HAMAP" id="MF_00260">
    <property type="entry name" value="Porphobil_deam"/>
    <property type="match status" value="1"/>
</dbReference>
<dbReference type="InterPro" id="IPR000860">
    <property type="entry name" value="HemC"/>
</dbReference>
<dbReference type="InterPro" id="IPR022419">
    <property type="entry name" value="Porphobilin_deaminase_cofac_BS"/>
</dbReference>
<dbReference type="InterPro" id="IPR022417">
    <property type="entry name" value="Porphobilin_deaminase_N"/>
</dbReference>
<dbReference type="InterPro" id="IPR022418">
    <property type="entry name" value="Porphobilinogen_deaminase_C"/>
</dbReference>
<dbReference type="InterPro" id="IPR036803">
    <property type="entry name" value="Porphobilinogen_deaminase_C_sf"/>
</dbReference>
<dbReference type="NCBIfam" id="TIGR00212">
    <property type="entry name" value="hemC"/>
    <property type="match status" value="1"/>
</dbReference>
<dbReference type="PANTHER" id="PTHR11557">
    <property type="entry name" value="PORPHOBILINOGEN DEAMINASE"/>
    <property type="match status" value="1"/>
</dbReference>
<dbReference type="PANTHER" id="PTHR11557:SF0">
    <property type="entry name" value="PORPHOBILINOGEN DEAMINASE"/>
    <property type="match status" value="1"/>
</dbReference>
<dbReference type="Pfam" id="PF01379">
    <property type="entry name" value="Porphobil_deam"/>
    <property type="match status" value="1"/>
</dbReference>
<dbReference type="Pfam" id="PF03900">
    <property type="entry name" value="Porphobil_deamC"/>
    <property type="match status" value="1"/>
</dbReference>
<dbReference type="PIRSF" id="PIRSF001438">
    <property type="entry name" value="4pyrrol_synth_OHMeBilane_synth"/>
    <property type="match status" value="1"/>
</dbReference>
<dbReference type="PRINTS" id="PR00151">
    <property type="entry name" value="PORPHBDMNASE"/>
</dbReference>
<dbReference type="SUPFAM" id="SSF53850">
    <property type="entry name" value="Periplasmic binding protein-like II"/>
    <property type="match status" value="1"/>
</dbReference>
<dbReference type="SUPFAM" id="SSF54782">
    <property type="entry name" value="Porphobilinogen deaminase (hydroxymethylbilane synthase), C-terminal domain"/>
    <property type="match status" value="1"/>
</dbReference>
<dbReference type="PROSITE" id="PS00533">
    <property type="entry name" value="PORPHOBILINOGEN_DEAM"/>
    <property type="match status" value="1"/>
</dbReference>